<evidence type="ECO:0000255" key="1"/>
<evidence type="ECO:0000255" key="2">
    <source>
        <dbReference type="HAMAP-Rule" id="MF_04131"/>
    </source>
</evidence>
<evidence type="ECO:0000305" key="3"/>
<dbReference type="EMBL" id="AB180969">
    <property type="protein sequence ID" value="BAD22585.1"/>
    <property type="molecule type" value="Genomic_RNA"/>
</dbReference>
<dbReference type="EMBL" id="EF672623">
    <property type="protein sequence ID" value="ABV53304.1"/>
    <property type="molecule type" value="Genomic_RNA"/>
</dbReference>
<dbReference type="SMR" id="B3SRX9"/>
<dbReference type="Proteomes" id="UP000006580">
    <property type="component" value="Genome"/>
</dbReference>
<dbReference type="GO" id="GO:0044166">
    <property type="term" value="C:host cell endoplasmic reticulum lumen"/>
    <property type="evidence" value="ECO:0007669"/>
    <property type="project" value="UniProtKB-SubCell"/>
</dbReference>
<dbReference type="GO" id="GO:0039621">
    <property type="term" value="C:T=13 icosahedral viral capsid"/>
    <property type="evidence" value="ECO:0007669"/>
    <property type="project" value="UniProtKB-UniRule"/>
</dbReference>
<dbReference type="GO" id="GO:0039624">
    <property type="term" value="C:viral outer capsid"/>
    <property type="evidence" value="ECO:0007669"/>
    <property type="project" value="UniProtKB-UniRule"/>
</dbReference>
<dbReference type="GO" id="GO:0046872">
    <property type="term" value="F:metal ion binding"/>
    <property type="evidence" value="ECO:0007669"/>
    <property type="project" value="UniProtKB-KW"/>
</dbReference>
<dbReference type="Gene3D" id="3.40.50.11130">
    <property type="entry name" value="Glycoprotein VP7, domain 1"/>
    <property type="match status" value="1"/>
</dbReference>
<dbReference type="Gene3D" id="2.60.120.800">
    <property type="entry name" value="Rotavirus outer-layer protein VP7, domain 2"/>
    <property type="match status" value="1"/>
</dbReference>
<dbReference type="HAMAP" id="MF_04130">
    <property type="entry name" value="Rota_VP7"/>
    <property type="match status" value="1"/>
</dbReference>
<dbReference type="HAMAP" id="MF_04131">
    <property type="entry name" value="Rota_VP7_A"/>
    <property type="match status" value="1"/>
</dbReference>
<dbReference type="InterPro" id="IPR001963">
    <property type="entry name" value="VP7"/>
</dbReference>
<dbReference type="InterPro" id="IPR042207">
    <property type="entry name" value="VP7_1"/>
</dbReference>
<dbReference type="InterPro" id="IPR042210">
    <property type="entry name" value="VP7_2"/>
</dbReference>
<dbReference type="Pfam" id="PF00434">
    <property type="entry name" value="VP7"/>
    <property type="match status" value="1"/>
</dbReference>
<organismHost>
    <name type="scientific">Homo sapiens</name>
    <name type="common">Human</name>
    <dbReference type="NCBI Taxonomy" id="9606"/>
</organismHost>
<accession>B3SRX9</accession>
<accession>Q6L5Y9</accession>
<proteinExistence type="inferred from homology"/>
<sequence length="326" mass="37039">MYGIEYTTVLTFLISIILLNYILKSLTSAMDFIIYRFLLLIVIVSPFVKTQNYGINLPITGSMDTAYANSSQLDTFLTSTLCLYYPAEASTQIGDTEWKNTLSQLFLTKGWPTGSVYFKEYTDIASFSIDPQLYCDYNVVLMKYDSTLKLDMSELADLILNEWLCNPMDITLYYYQQTDEANKWIAMGQSCTIKVCPLNTQTLGIGCTTTNTATFEEVAASEKLVITDVVDGVNHKLDVTTTTCTIRNCRKLGPRENVAIIQVGGSEVLDITADPTTAPQTERMMRINWKKWWQVFYTVVDYINQIVQVMSKRSRSLNSAAFYYRV</sequence>
<feature type="signal peptide" evidence="2">
    <location>
        <begin position="1"/>
        <end position="50"/>
    </location>
</feature>
<feature type="chain" id="PRO_0000369102" description="Outer capsid glycoprotein VP7" evidence="2">
    <location>
        <begin position="51"/>
        <end position="326"/>
    </location>
</feature>
<feature type="region of interest" description="CNP motif; interaction with ITGAV/ITGB3" evidence="2">
    <location>
        <begin position="165"/>
        <end position="167"/>
    </location>
</feature>
<feature type="region of interest" description="LVD motif; interaction with ITGA4/ITGB1 heterodimer" evidence="2">
    <location>
        <begin position="237"/>
        <end position="239"/>
    </location>
</feature>
<feature type="region of interest" description="GPR motif; interaction with ITGAX/ITGB2" evidence="2">
    <location>
        <begin position="253"/>
        <end position="255"/>
    </location>
</feature>
<feature type="binding site" evidence="2">
    <location>
        <position position="95"/>
    </location>
    <ligand>
        <name>Ca(2+)</name>
        <dbReference type="ChEBI" id="CHEBI:29108"/>
        <label>1</label>
    </ligand>
</feature>
<feature type="binding site" evidence="2">
    <location>
        <position position="177"/>
    </location>
    <ligand>
        <name>Ca(2+)</name>
        <dbReference type="ChEBI" id="CHEBI:29108"/>
        <label>2</label>
    </ligand>
</feature>
<feature type="binding site" evidence="2">
    <location>
        <position position="206"/>
    </location>
    <ligand>
        <name>Ca(2+)</name>
        <dbReference type="ChEBI" id="CHEBI:29108"/>
        <label>1</label>
    </ligand>
</feature>
<feature type="binding site" evidence="2">
    <location>
        <position position="214"/>
    </location>
    <ligand>
        <name>Ca(2+)</name>
        <dbReference type="ChEBI" id="CHEBI:29108"/>
        <label>1</label>
    </ligand>
</feature>
<feature type="binding site" evidence="2">
    <location>
        <position position="216"/>
    </location>
    <ligand>
        <name>Ca(2+)</name>
        <dbReference type="ChEBI" id="CHEBI:29108"/>
        <label>1</label>
    </ligand>
</feature>
<feature type="binding site" evidence="2">
    <location>
        <position position="228"/>
    </location>
    <ligand>
        <name>Ca(2+)</name>
        <dbReference type="ChEBI" id="CHEBI:29108"/>
        <label>2</label>
    </ligand>
</feature>
<feature type="binding site" evidence="2">
    <location>
        <position position="229"/>
    </location>
    <ligand>
        <name>Ca(2+)</name>
        <dbReference type="ChEBI" id="CHEBI:29108"/>
        <label>2</label>
    </ligand>
</feature>
<feature type="binding site" evidence="2">
    <location>
        <position position="231"/>
    </location>
    <ligand>
        <name>Ca(2+)</name>
        <dbReference type="ChEBI" id="CHEBI:29108"/>
        <label>2</label>
    </ligand>
</feature>
<feature type="binding site" evidence="2">
    <location>
        <position position="301"/>
    </location>
    <ligand>
        <name>Ca(2+)</name>
        <dbReference type="ChEBI" id="CHEBI:29108"/>
        <label>2</label>
    </ligand>
</feature>
<feature type="glycosylation site" description="N-linked (GlcNAc...) asparagine; by host" evidence="1">
    <location>
        <position position="69"/>
    </location>
</feature>
<feature type="disulfide bond" evidence="2">
    <location>
        <begin position="82"/>
        <end position="135"/>
    </location>
</feature>
<feature type="disulfide bond" evidence="2">
    <location>
        <begin position="165"/>
        <end position="249"/>
    </location>
</feature>
<feature type="disulfide bond" evidence="2">
    <location>
        <begin position="191"/>
        <end position="244"/>
    </location>
</feature>
<feature type="disulfide bond" evidence="2">
    <location>
        <begin position="196"/>
        <end position="207"/>
    </location>
</feature>
<feature type="splice variant" id="VSP_038600" description="In isoform 2." evidence="3">
    <location>
        <begin position="1"/>
        <end position="29"/>
    </location>
</feature>
<feature type="sequence conflict" description="In Ref. 1; BAD22585." evidence="3" ref="1">
    <original>N</original>
    <variation>D</variation>
    <location>
        <position position="100"/>
    </location>
</feature>
<feature type="sequence conflict" description="In Ref. 1; BAD22585." evidence="3" ref="1">
    <original>K</original>
    <variation>E</variation>
    <location>
        <position position="149"/>
    </location>
</feature>
<keyword id="KW-0024">Alternative initiation</keyword>
<keyword id="KW-0106">Calcium</keyword>
<keyword id="KW-0167">Capsid protein</keyword>
<keyword id="KW-1015">Disulfide bond</keyword>
<keyword id="KW-0325">Glycoprotein</keyword>
<keyword id="KW-1038">Host endoplasmic reticulum</keyword>
<keyword id="KW-0945">Host-virus interaction</keyword>
<keyword id="KW-0479">Metal-binding</keyword>
<keyword id="KW-1152">Outer capsid protein</keyword>
<keyword id="KW-0732">Signal</keyword>
<keyword id="KW-1146">T=13 icosahedral capsid protein</keyword>
<keyword id="KW-0946">Virion</keyword>
<name>VP7_ROTWI</name>
<reference key="1">
    <citation type="submission" date="2004-06" db="EMBL/GenBank/DDBJ databases">
        <title>VP7 genes of group A rotaviruses.</title>
        <authorList>
            <person name="Honma S."/>
            <person name="Hoshino Y."/>
        </authorList>
    </citation>
    <scope>NUCLEOTIDE SEQUENCE [GENOMIC RNA]</scope>
</reference>
<reference key="2">
    <citation type="journal article" date="2008" name="J. Virol.">
        <title>Group A human rotavirus genomics: evidence that gene constellations are influenced by viral protein interactions.</title>
        <authorList>
            <person name="Heiman E.M."/>
            <person name="McDonald S.M."/>
            <person name="Barro M."/>
            <person name="Taraporewala Z.F."/>
            <person name="Bar-Magen T."/>
            <person name="Patton J.T."/>
        </authorList>
    </citation>
    <scope>NUCLEOTIDE SEQUENCE [GENOMIC RNA]</scope>
</reference>
<protein>
    <recommendedName>
        <fullName evidence="2">Outer capsid glycoprotein VP7</fullName>
    </recommendedName>
</protein>
<comment type="function">
    <text evidence="2">Calcium-binding protein that interacts with rotavirus cell receptors once the initial attachment by VP4 has been achieved. Rotavirus attachment and entry into the host cell probably involves multiple sequential contacts between the outer capsid proteins VP4 and VP7, and the cell receptors. Following entry into the host cell, low intracellular or intravesicular Ca(2+) concentration probably causes the calcium-stabilized VP7 trimers to dissociate from the virion. This step is probably necessary for the membrane-disrupting entry step and the release of VP4, which is locked onto the virion by VP7.</text>
</comment>
<comment type="subunit">
    <text evidence="2">Homotrimer; disulfide-linked. 2 Ca(2+) ions bound at each subunit interface in the trimer hold the trimer together. Interacts with the intermediate capsid protein VP6. Interacts with the outer capsid protein VP5*.</text>
</comment>
<comment type="subcellular location">
    <subcellularLocation>
        <location evidence="2">Virion</location>
    </subcellularLocation>
    <subcellularLocation>
        <location evidence="2">Host endoplasmic reticulum lumen</location>
    </subcellularLocation>
    <text evidence="2">The outer layer contains 780 copies of VP7, grouped as 260 trimers. Immature double-layered particles assembled in the cytoplasm bud across the membrane of the endoplasmic reticulum, acquiring during this process a transient lipid membrane that is modified with the ER resident viral glycoproteins NSP4 and VP7; these enveloped particles also contain VP4. As the particles move towards the interior of the ER cisternae, the transient lipid membrane and the non-structural protein NSP4 are lost, while the virus surface proteins VP4 and VP7 rearrange to form the outermost virus protein layer, yielding mature infectious triple-layered particles.</text>
</comment>
<comment type="alternative products">
    <event type="alternative initiation"/>
    <isoform>
        <id>B3SRX9-1</id>
        <name>1</name>
        <sequence type="displayed"/>
    </isoform>
    <isoform>
        <id>B3SRX9-2</id>
        <name>2</name>
        <sequence type="described" ref="VSP_038600"/>
    </isoform>
</comment>
<comment type="PTM">
    <text evidence="2">N-glycosylated.</text>
</comment>
<comment type="PTM">
    <text evidence="2">The N-terminus is blocked possibly by pyroglutamic acid.</text>
</comment>
<comment type="miscellaneous">
    <text evidence="2">Some rotavirus strains are neuraminidase-sensitive and require sialic acid to attach to the cell surface. Some rotavirus strains are integrin-dependent. Some rotavirus strains depend on ganglioside for their entry into the host cell. Hsp70 also seems to be involved in the entry of some strains.</text>
</comment>
<comment type="miscellaneous">
    <text evidence="2">In group A rotaviruses, VP7 defines the G serotype.</text>
</comment>
<comment type="miscellaneous">
    <molecule>Isoform 2</molecule>
    <text evidence="3">Produced by alternative initiation at Met-30 of isoform 1.</text>
</comment>
<comment type="similarity">
    <text evidence="2">Belongs to the rotavirus VP7 family.</text>
</comment>
<organism>
    <name type="scientific">Rotavirus A (isolate RVA/Human/United States/WI61/1983/G9P1A[8])</name>
    <name type="common">RV-A</name>
    <dbReference type="NCBI Taxonomy" id="578830"/>
    <lineage>
        <taxon>Viruses</taxon>
        <taxon>Riboviria</taxon>
        <taxon>Orthornavirae</taxon>
        <taxon>Duplornaviricota</taxon>
        <taxon>Resentoviricetes</taxon>
        <taxon>Reovirales</taxon>
        <taxon>Sedoreoviridae</taxon>
        <taxon>Rotavirus</taxon>
        <taxon>Rotavirus A</taxon>
    </lineage>
</organism>